<organism>
    <name type="scientific">Cupriavidus taiwanensis (strain DSM 17343 / BCRC 17206 / CCUG 44338 / CIP 107171 / LMG 19424 / R1)</name>
    <name type="common">Ralstonia taiwanensis (strain LMG 19424)</name>
    <dbReference type="NCBI Taxonomy" id="977880"/>
    <lineage>
        <taxon>Bacteria</taxon>
        <taxon>Pseudomonadati</taxon>
        <taxon>Pseudomonadota</taxon>
        <taxon>Betaproteobacteria</taxon>
        <taxon>Burkholderiales</taxon>
        <taxon>Burkholderiaceae</taxon>
        <taxon>Cupriavidus</taxon>
    </lineage>
</organism>
<reference key="1">
    <citation type="journal article" date="2008" name="Genome Res.">
        <title>Genome sequence of the beta-rhizobium Cupriavidus taiwanensis and comparative genomics of rhizobia.</title>
        <authorList>
            <person name="Amadou C."/>
            <person name="Pascal G."/>
            <person name="Mangenot S."/>
            <person name="Glew M."/>
            <person name="Bontemps C."/>
            <person name="Capela D."/>
            <person name="Carrere S."/>
            <person name="Cruveiller S."/>
            <person name="Dossat C."/>
            <person name="Lajus A."/>
            <person name="Marchetti M."/>
            <person name="Poinsot V."/>
            <person name="Rouy Z."/>
            <person name="Servin B."/>
            <person name="Saad M."/>
            <person name="Schenowitz C."/>
            <person name="Barbe V."/>
            <person name="Batut J."/>
            <person name="Medigue C."/>
            <person name="Masson-Boivin C."/>
        </authorList>
    </citation>
    <scope>NUCLEOTIDE SEQUENCE [LARGE SCALE GENOMIC DNA]</scope>
    <source>
        <strain>DSM 17343 / BCRC 17206 / CCUG 44338 / CIP 107171 / LMG 19424 / R1</strain>
    </source>
</reference>
<feature type="chain" id="PRO_1000196031" description="Large ribosomal subunit protein bL34">
    <location>
        <begin position="1"/>
        <end position="44"/>
    </location>
</feature>
<protein>
    <recommendedName>
        <fullName evidence="1">Large ribosomal subunit protein bL34</fullName>
    </recommendedName>
    <alternativeName>
        <fullName evidence="2">50S ribosomal protein L34</fullName>
    </alternativeName>
</protein>
<evidence type="ECO:0000255" key="1">
    <source>
        <dbReference type="HAMAP-Rule" id="MF_00391"/>
    </source>
</evidence>
<evidence type="ECO:0000305" key="2"/>
<gene>
    <name evidence="1" type="primary">rpmH</name>
    <name type="ordered locus">RALTA_A3220</name>
</gene>
<comment type="similarity">
    <text evidence="1">Belongs to the bacterial ribosomal protein bL34 family.</text>
</comment>
<accession>B3R886</accession>
<keyword id="KW-0687">Ribonucleoprotein</keyword>
<keyword id="KW-0689">Ribosomal protein</keyword>
<sequence length="44" mass="5223">MKRTYQPSVTRRKRTHGFRVRMKTRGGRAVINARRAKGRKRLAI</sequence>
<dbReference type="EMBL" id="CU633749">
    <property type="protein sequence ID" value="CAQ71136.1"/>
    <property type="molecule type" value="Genomic_DNA"/>
</dbReference>
<dbReference type="RefSeq" id="WP_008650850.1">
    <property type="nucleotide sequence ID" value="NC_010528.1"/>
</dbReference>
<dbReference type="SMR" id="B3R886"/>
<dbReference type="GeneID" id="98343429"/>
<dbReference type="KEGG" id="cti:RALTA_A3220"/>
<dbReference type="eggNOG" id="COG0230">
    <property type="taxonomic scope" value="Bacteria"/>
</dbReference>
<dbReference type="HOGENOM" id="CLU_129938_2_0_4"/>
<dbReference type="BioCyc" id="CTAI977880:RALTA_RS15740-MONOMER"/>
<dbReference type="Proteomes" id="UP000001692">
    <property type="component" value="Chromosome 1"/>
</dbReference>
<dbReference type="GO" id="GO:1990904">
    <property type="term" value="C:ribonucleoprotein complex"/>
    <property type="evidence" value="ECO:0007669"/>
    <property type="project" value="UniProtKB-KW"/>
</dbReference>
<dbReference type="GO" id="GO:0005840">
    <property type="term" value="C:ribosome"/>
    <property type="evidence" value="ECO:0007669"/>
    <property type="project" value="UniProtKB-KW"/>
</dbReference>
<dbReference type="GO" id="GO:0003735">
    <property type="term" value="F:structural constituent of ribosome"/>
    <property type="evidence" value="ECO:0007669"/>
    <property type="project" value="InterPro"/>
</dbReference>
<dbReference type="GO" id="GO:0006412">
    <property type="term" value="P:translation"/>
    <property type="evidence" value="ECO:0007669"/>
    <property type="project" value="UniProtKB-UniRule"/>
</dbReference>
<dbReference type="FunFam" id="1.10.287.3980:FF:000001">
    <property type="entry name" value="Mitochondrial ribosomal protein L34"/>
    <property type="match status" value="1"/>
</dbReference>
<dbReference type="Gene3D" id="1.10.287.3980">
    <property type="match status" value="1"/>
</dbReference>
<dbReference type="HAMAP" id="MF_00391">
    <property type="entry name" value="Ribosomal_bL34"/>
    <property type="match status" value="1"/>
</dbReference>
<dbReference type="InterPro" id="IPR000271">
    <property type="entry name" value="Ribosomal_bL34"/>
</dbReference>
<dbReference type="InterPro" id="IPR020939">
    <property type="entry name" value="Ribosomal_bL34_CS"/>
</dbReference>
<dbReference type="NCBIfam" id="TIGR01030">
    <property type="entry name" value="rpmH_bact"/>
    <property type="match status" value="1"/>
</dbReference>
<dbReference type="PANTHER" id="PTHR14503:SF4">
    <property type="entry name" value="LARGE RIBOSOMAL SUBUNIT PROTEIN BL34M"/>
    <property type="match status" value="1"/>
</dbReference>
<dbReference type="PANTHER" id="PTHR14503">
    <property type="entry name" value="MITOCHONDRIAL RIBOSOMAL PROTEIN 34 FAMILY MEMBER"/>
    <property type="match status" value="1"/>
</dbReference>
<dbReference type="Pfam" id="PF00468">
    <property type="entry name" value="Ribosomal_L34"/>
    <property type="match status" value="1"/>
</dbReference>
<dbReference type="PROSITE" id="PS00784">
    <property type="entry name" value="RIBOSOMAL_L34"/>
    <property type="match status" value="1"/>
</dbReference>
<proteinExistence type="inferred from homology"/>
<name>RL34_CUPTR</name>